<reference key="1">
    <citation type="journal article" date="2014" name="Stand. Genomic Sci.">
        <title>Complete genome sequence of Anabaena variabilis ATCC 29413.</title>
        <authorList>
            <person name="Thiel T."/>
            <person name="Pratte B.S."/>
            <person name="Zhong J."/>
            <person name="Goodwin L."/>
            <person name="Copeland A."/>
            <person name="Lucas S."/>
            <person name="Han C."/>
            <person name="Pitluck S."/>
            <person name="Land M.L."/>
            <person name="Kyrpides N.C."/>
            <person name="Woyke T."/>
        </authorList>
    </citation>
    <scope>NUCLEOTIDE SEQUENCE [LARGE SCALE GENOMIC DNA]</scope>
    <source>
        <strain>ATCC 29413 / PCC 7937</strain>
    </source>
</reference>
<protein>
    <recommendedName>
        <fullName evidence="1">Acetylglutamate kinase</fullName>
        <ecNumber evidence="1">2.7.2.8</ecNumber>
    </recommendedName>
    <alternativeName>
        <fullName evidence="1">N-acetyl-L-glutamate 5-phosphotransferase</fullName>
    </alternativeName>
    <alternativeName>
        <fullName evidence="1">NAG kinase</fullName>
        <shortName evidence="1">NAGK</shortName>
    </alternativeName>
</protein>
<gene>
    <name evidence="1" type="primary">argB</name>
    <name type="ordered locus">Ava_0554</name>
</gene>
<keyword id="KW-0028">Amino-acid biosynthesis</keyword>
<keyword id="KW-0055">Arginine biosynthesis</keyword>
<keyword id="KW-0067">ATP-binding</keyword>
<keyword id="KW-0963">Cytoplasm</keyword>
<keyword id="KW-0418">Kinase</keyword>
<keyword id="KW-0547">Nucleotide-binding</keyword>
<keyword id="KW-0808">Transferase</keyword>
<proteinExistence type="inferred from homology"/>
<sequence>MMVNDIEYIRQAEATRVQVLSEALPYIQQFAGRTVVVKYGGAAMKDSHLKDQVIRDIVFLSCVGLRPILVHGGGPEINSWLDKLGIEAQFKNGLRVTDAPTMDVVEMVLVGRVNKEIVSLINQAGGLAVGLCGKDGNLITARPQGQEGIGFVGEVSNVNIKILETLASNGYIPVVSSVAADDSGQAYNINADTVAGEIAAALGAEKLILLTDTRGILKDYKDPGTLIPKVDIREARELINGGVVSGGMIPKVTCCVRSLAQGVRAAHIIDGRIPHALLLEIFTDVGIGTMILGSQYS</sequence>
<name>ARGB_TRIV2</name>
<organism>
    <name type="scientific">Trichormus variabilis (strain ATCC 29413 / PCC 7937)</name>
    <name type="common">Anabaena variabilis</name>
    <dbReference type="NCBI Taxonomy" id="240292"/>
    <lineage>
        <taxon>Bacteria</taxon>
        <taxon>Bacillati</taxon>
        <taxon>Cyanobacteriota</taxon>
        <taxon>Cyanophyceae</taxon>
        <taxon>Nostocales</taxon>
        <taxon>Nostocaceae</taxon>
        <taxon>Trichormus</taxon>
    </lineage>
</organism>
<comment type="function">
    <text evidence="1">Catalyzes the ATP-dependent phosphorylation of N-acetyl-L-glutamate.</text>
</comment>
<comment type="catalytic activity">
    <reaction evidence="1">
        <text>N-acetyl-L-glutamate + ATP = N-acetyl-L-glutamyl 5-phosphate + ADP</text>
        <dbReference type="Rhea" id="RHEA:14629"/>
        <dbReference type="ChEBI" id="CHEBI:30616"/>
        <dbReference type="ChEBI" id="CHEBI:44337"/>
        <dbReference type="ChEBI" id="CHEBI:57936"/>
        <dbReference type="ChEBI" id="CHEBI:456216"/>
        <dbReference type="EC" id="2.7.2.8"/>
    </reaction>
</comment>
<comment type="pathway">
    <text evidence="1">Amino-acid biosynthesis; L-arginine biosynthesis; N(2)-acetyl-L-ornithine from L-glutamate: step 2/4.</text>
</comment>
<comment type="subcellular location">
    <subcellularLocation>
        <location evidence="1">Cytoplasm</location>
    </subcellularLocation>
</comment>
<comment type="similarity">
    <text evidence="1">Belongs to the acetylglutamate kinase family. ArgB subfamily.</text>
</comment>
<feature type="chain" id="PRO_0000264680" description="Acetylglutamate kinase">
    <location>
        <begin position="1"/>
        <end position="297"/>
    </location>
</feature>
<feature type="binding site" evidence="1">
    <location>
        <begin position="73"/>
        <end position="74"/>
    </location>
    <ligand>
        <name>substrate</name>
    </ligand>
</feature>
<feature type="binding site" evidence="1">
    <location>
        <position position="95"/>
    </location>
    <ligand>
        <name>substrate</name>
    </ligand>
</feature>
<feature type="binding site" evidence="1">
    <location>
        <position position="188"/>
    </location>
    <ligand>
        <name>substrate</name>
    </ligand>
</feature>
<feature type="site" description="Transition state stabilizer" evidence="1">
    <location>
        <position position="38"/>
    </location>
</feature>
<feature type="site" description="Transition state stabilizer" evidence="1">
    <location>
        <position position="251"/>
    </location>
</feature>
<evidence type="ECO:0000255" key="1">
    <source>
        <dbReference type="HAMAP-Rule" id="MF_00082"/>
    </source>
</evidence>
<accession>Q3MFQ8</accession>
<dbReference type="EC" id="2.7.2.8" evidence="1"/>
<dbReference type="EMBL" id="CP000117">
    <property type="protein sequence ID" value="ABA20178.1"/>
    <property type="molecule type" value="Genomic_DNA"/>
</dbReference>
<dbReference type="SMR" id="Q3MFQ8"/>
<dbReference type="STRING" id="240292.Ava_0554"/>
<dbReference type="KEGG" id="ava:Ava_0554"/>
<dbReference type="eggNOG" id="COG0548">
    <property type="taxonomic scope" value="Bacteria"/>
</dbReference>
<dbReference type="HOGENOM" id="CLU_053680_0_1_3"/>
<dbReference type="UniPathway" id="UPA00068">
    <property type="reaction ID" value="UER00107"/>
</dbReference>
<dbReference type="Proteomes" id="UP000002533">
    <property type="component" value="Chromosome"/>
</dbReference>
<dbReference type="GO" id="GO:0005737">
    <property type="term" value="C:cytoplasm"/>
    <property type="evidence" value="ECO:0007669"/>
    <property type="project" value="UniProtKB-SubCell"/>
</dbReference>
<dbReference type="GO" id="GO:0003991">
    <property type="term" value="F:acetylglutamate kinase activity"/>
    <property type="evidence" value="ECO:0007669"/>
    <property type="project" value="UniProtKB-UniRule"/>
</dbReference>
<dbReference type="GO" id="GO:0005524">
    <property type="term" value="F:ATP binding"/>
    <property type="evidence" value="ECO:0007669"/>
    <property type="project" value="UniProtKB-UniRule"/>
</dbReference>
<dbReference type="GO" id="GO:0042450">
    <property type="term" value="P:arginine biosynthetic process via ornithine"/>
    <property type="evidence" value="ECO:0007669"/>
    <property type="project" value="UniProtKB-UniRule"/>
</dbReference>
<dbReference type="GO" id="GO:0006526">
    <property type="term" value="P:L-arginine biosynthetic process"/>
    <property type="evidence" value="ECO:0007669"/>
    <property type="project" value="UniProtKB-UniPathway"/>
</dbReference>
<dbReference type="CDD" id="cd04250">
    <property type="entry name" value="AAK_NAGK-C"/>
    <property type="match status" value="1"/>
</dbReference>
<dbReference type="FunFam" id="3.40.1160.10:FF:000004">
    <property type="entry name" value="Acetylglutamate kinase"/>
    <property type="match status" value="1"/>
</dbReference>
<dbReference type="Gene3D" id="3.40.1160.10">
    <property type="entry name" value="Acetylglutamate kinase-like"/>
    <property type="match status" value="1"/>
</dbReference>
<dbReference type="HAMAP" id="MF_00082">
    <property type="entry name" value="ArgB"/>
    <property type="match status" value="1"/>
</dbReference>
<dbReference type="InterPro" id="IPR036393">
    <property type="entry name" value="AceGlu_kinase-like_sf"/>
</dbReference>
<dbReference type="InterPro" id="IPR004662">
    <property type="entry name" value="AcgluKinase_fam"/>
</dbReference>
<dbReference type="InterPro" id="IPR037528">
    <property type="entry name" value="ArgB"/>
</dbReference>
<dbReference type="InterPro" id="IPR001048">
    <property type="entry name" value="Asp/Glu/Uridylate_kinase"/>
</dbReference>
<dbReference type="InterPro" id="IPR001057">
    <property type="entry name" value="Glu/AcGlu_kinase"/>
</dbReference>
<dbReference type="InterPro" id="IPR041727">
    <property type="entry name" value="NAGK-C"/>
</dbReference>
<dbReference type="NCBIfam" id="TIGR00761">
    <property type="entry name" value="argB"/>
    <property type="match status" value="1"/>
</dbReference>
<dbReference type="PANTHER" id="PTHR23342">
    <property type="entry name" value="N-ACETYLGLUTAMATE SYNTHASE"/>
    <property type="match status" value="1"/>
</dbReference>
<dbReference type="PANTHER" id="PTHR23342:SF0">
    <property type="entry name" value="N-ACETYLGLUTAMATE SYNTHASE, MITOCHONDRIAL"/>
    <property type="match status" value="1"/>
</dbReference>
<dbReference type="Pfam" id="PF00696">
    <property type="entry name" value="AA_kinase"/>
    <property type="match status" value="1"/>
</dbReference>
<dbReference type="PIRSF" id="PIRSF000728">
    <property type="entry name" value="NAGK"/>
    <property type="match status" value="1"/>
</dbReference>
<dbReference type="PRINTS" id="PR00474">
    <property type="entry name" value="GLU5KINASE"/>
</dbReference>
<dbReference type="SUPFAM" id="SSF53633">
    <property type="entry name" value="Carbamate kinase-like"/>
    <property type="match status" value="1"/>
</dbReference>